<gene>
    <name type="primary">Cdc42se2</name>
</gene>
<keyword id="KW-1003">Cell membrane</keyword>
<keyword id="KW-0966">Cell projection</keyword>
<keyword id="KW-0133">Cell shape</keyword>
<keyword id="KW-0963">Cytoplasm</keyword>
<keyword id="KW-0206">Cytoskeleton</keyword>
<keyword id="KW-0449">Lipoprotein</keyword>
<keyword id="KW-0472">Membrane</keyword>
<keyword id="KW-0564">Palmitate</keyword>
<keyword id="KW-0581">Phagocytosis</keyword>
<keyword id="KW-0597">Phosphoprotein</keyword>
<keyword id="KW-1185">Reference proteome</keyword>
<comment type="function">
    <text evidence="1">Probably involved in the organization of the actin cytoskeleton by acting downstream of CDC42, inducing actin filament assembly. Alters CDC42-induced cell shape changes. In activated T-cells, may play a role in CDC42-mediated F-actin accumulation at the immunological synapse. May play a role in early contractile events in phagocytosis in macrophages (By similarity).</text>
</comment>
<comment type="subunit">
    <text evidence="1">Interacts with CDC42 (in GTP-bound form). Interacts weakly with RAC1 and not at all with RHOA (By similarity).</text>
</comment>
<comment type="subcellular location">
    <subcellularLocation>
        <location evidence="1">Cytoplasm</location>
        <location evidence="1">Cytoskeleton</location>
    </subcellularLocation>
    <subcellularLocation>
        <location evidence="1">Cell membrane</location>
        <topology evidence="1">Lipid-anchor</topology>
    </subcellularLocation>
    <subcellularLocation>
        <location evidence="1">Cell projection</location>
        <location evidence="1">Phagocytic cup</location>
    </subcellularLocation>
    <text evidence="1">Recruited to the activated TCR prior actin polymerization. Localizes at the phagocytic cup of macrophages.</text>
</comment>
<comment type="domain">
    <text evidence="1">The CRIB domain mediates interaction with CDC42.</text>
</comment>
<comment type="similarity">
    <text evidence="4">Belongs to the CDC42SE/SPEC family.</text>
</comment>
<protein>
    <recommendedName>
        <fullName>CDC42 small effector protein 2</fullName>
    </recommendedName>
</protein>
<name>C42S2_RAT</name>
<feature type="chain" id="PRO_0000334642" description="CDC42 small effector protein 2">
    <location>
        <begin position="1"/>
        <end position="83"/>
    </location>
</feature>
<feature type="domain" description="CRIB" evidence="3">
    <location>
        <begin position="28"/>
        <end position="41"/>
    </location>
</feature>
<feature type="modified residue" description="Phosphoserine" evidence="2">
    <location>
        <position position="42"/>
    </location>
</feature>
<feature type="modified residue" description="Phosphoserine" evidence="2">
    <location>
        <position position="51"/>
    </location>
</feature>
<feature type="lipid moiety-binding region" description="S-palmitoyl cysteine" evidence="1">
    <location>
        <position position="10"/>
    </location>
</feature>
<feature type="lipid moiety-binding region" description="S-palmitoyl cysteine" evidence="1">
    <location>
        <position position="11"/>
    </location>
</feature>
<proteinExistence type="inferred from homology"/>
<dbReference type="EMBL" id="BC169039">
    <property type="protein sequence ID" value="AAI69039.1"/>
    <property type="molecule type" value="mRNA"/>
</dbReference>
<dbReference type="SMR" id="A1L1K4"/>
<dbReference type="FunCoup" id="A1L1K4">
    <property type="interactions" value="2415"/>
</dbReference>
<dbReference type="STRING" id="10116.ENSRNOP00000061001"/>
<dbReference type="PhosphoSitePlus" id="A1L1K4"/>
<dbReference type="SwissPalm" id="A1L1K4"/>
<dbReference type="PaxDb" id="10116-ENSRNOP00000061001"/>
<dbReference type="PeptideAtlas" id="A1L1K4"/>
<dbReference type="Ensembl" id="ENSRNOT00000063891.3">
    <property type="protein sequence ID" value="ENSRNOP00000061001.3"/>
    <property type="gene ID" value="ENSRNOG00000042449.3"/>
</dbReference>
<dbReference type="UCSC" id="RGD:1563924">
    <property type="organism name" value="rat"/>
</dbReference>
<dbReference type="AGR" id="RGD:1563924"/>
<dbReference type="RGD" id="1563924">
    <property type="gene designation" value="Cdc42se2"/>
</dbReference>
<dbReference type="eggNOG" id="ENOG502S22R">
    <property type="taxonomic scope" value="Eukaryota"/>
</dbReference>
<dbReference type="InParanoid" id="A1L1K4"/>
<dbReference type="PhylomeDB" id="A1L1K4"/>
<dbReference type="TreeFam" id="TF323815"/>
<dbReference type="PRO" id="PR:A1L1K4"/>
<dbReference type="Proteomes" id="UP000002494">
    <property type="component" value="Chromosome 10"/>
</dbReference>
<dbReference type="GO" id="GO:0042995">
    <property type="term" value="C:cell projection"/>
    <property type="evidence" value="ECO:0007669"/>
    <property type="project" value="UniProtKB-KW"/>
</dbReference>
<dbReference type="GO" id="GO:0005737">
    <property type="term" value="C:cytoplasm"/>
    <property type="evidence" value="ECO:0007669"/>
    <property type="project" value="UniProtKB-KW"/>
</dbReference>
<dbReference type="GO" id="GO:0005856">
    <property type="term" value="C:cytoskeleton"/>
    <property type="evidence" value="ECO:0007669"/>
    <property type="project" value="UniProtKB-SubCell"/>
</dbReference>
<dbReference type="GO" id="GO:0001891">
    <property type="term" value="C:phagocytic cup"/>
    <property type="evidence" value="ECO:0007669"/>
    <property type="project" value="UniProtKB-SubCell"/>
</dbReference>
<dbReference type="GO" id="GO:0005886">
    <property type="term" value="C:plasma membrane"/>
    <property type="evidence" value="ECO:0000250"/>
    <property type="project" value="UniProtKB"/>
</dbReference>
<dbReference type="GO" id="GO:0035591">
    <property type="term" value="F:signaling adaptor activity"/>
    <property type="evidence" value="ECO:0000266"/>
    <property type="project" value="RGD"/>
</dbReference>
<dbReference type="GO" id="GO:0031267">
    <property type="term" value="F:small GTPase binding"/>
    <property type="evidence" value="ECO:0007669"/>
    <property type="project" value="InterPro"/>
</dbReference>
<dbReference type="GO" id="GO:0006909">
    <property type="term" value="P:phagocytosis"/>
    <property type="evidence" value="ECO:0007669"/>
    <property type="project" value="UniProtKB-KW"/>
</dbReference>
<dbReference type="GO" id="GO:0008360">
    <property type="term" value="P:regulation of cell shape"/>
    <property type="evidence" value="ECO:0007669"/>
    <property type="project" value="UniProtKB-KW"/>
</dbReference>
<dbReference type="GO" id="GO:0035023">
    <property type="term" value="P:regulation of Rho protein signal transduction"/>
    <property type="evidence" value="ECO:0007669"/>
    <property type="project" value="InterPro"/>
</dbReference>
<dbReference type="GO" id="GO:0009966">
    <property type="term" value="P:regulation of signal transduction"/>
    <property type="evidence" value="ECO:0000250"/>
    <property type="project" value="UniProtKB"/>
</dbReference>
<dbReference type="CDD" id="cd00132">
    <property type="entry name" value="CRIB"/>
    <property type="match status" value="1"/>
</dbReference>
<dbReference type="FunFam" id="3.90.810.10:FF:000004">
    <property type="entry name" value="CDC42 small effector protein 2"/>
    <property type="match status" value="1"/>
</dbReference>
<dbReference type="Gene3D" id="3.90.810.10">
    <property type="entry name" value="CRIB domain"/>
    <property type="match status" value="1"/>
</dbReference>
<dbReference type="InterPro" id="IPR000095">
    <property type="entry name" value="CRIB_dom"/>
</dbReference>
<dbReference type="InterPro" id="IPR036936">
    <property type="entry name" value="CRIB_dom_sf"/>
</dbReference>
<dbReference type="InterPro" id="IPR039056">
    <property type="entry name" value="SPEC"/>
</dbReference>
<dbReference type="PANTHER" id="PTHR13502:SF4">
    <property type="entry name" value="CDC42 SMALL EFFECTOR PROTEIN 2"/>
    <property type="match status" value="1"/>
</dbReference>
<dbReference type="PANTHER" id="PTHR13502">
    <property type="entry name" value="CDC42 SMALL EFFECTOR PROTEIN HOMOLOG"/>
    <property type="match status" value="1"/>
</dbReference>
<dbReference type="Pfam" id="PF00786">
    <property type="entry name" value="PBD"/>
    <property type="match status" value="1"/>
</dbReference>
<dbReference type="PROSITE" id="PS50108">
    <property type="entry name" value="CRIB"/>
    <property type="match status" value="1"/>
</dbReference>
<evidence type="ECO:0000250" key="1"/>
<evidence type="ECO:0000250" key="2">
    <source>
        <dbReference type="UniProtKB" id="Q8BGH7"/>
    </source>
</evidence>
<evidence type="ECO:0000255" key="3">
    <source>
        <dbReference type="PROSITE-ProRule" id="PRU00057"/>
    </source>
</evidence>
<evidence type="ECO:0000305" key="4"/>
<reference key="1">
    <citation type="journal article" date="2004" name="Genome Res.">
        <title>The status, quality, and expansion of the NIH full-length cDNA project: the Mammalian Gene Collection (MGC).</title>
        <authorList>
            <consortium name="The MGC Project Team"/>
        </authorList>
    </citation>
    <scope>NUCLEOTIDE SEQUENCE [LARGE SCALE MRNA]</scope>
    <source>
        <strain>Brown Norway/Mcwi</strain>
        <tissue>Embryonic lung</tissue>
    </source>
</reference>
<sequence length="83" mass="9095">MSEFWLCFNCCIAEQPQPRRRRIDRSMIGEPTNFVHTAHVGSGDLFSGMNSVSSIQNQMQSKGGYGGGMPANVQMQLVDTKAG</sequence>
<accession>A1L1K4</accession>
<accession>B5DFF3</accession>
<organism>
    <name type="scientific">Rattus norvegicus</name>
    <name type="common">Rat</name>
    <dbReference type="NCBI Taxonomy" id="10116"/>
    <lineage>
        <taxon>Eukaryota</taxon>
        <taxon>Metazoa</taxon>
        <taxon>Chordata</taxon>
        <taxon>Craniata</taxon>
        <taxon>Vertebrata</taxon>
        <taxon>Euteleostomi</taxon>
        <taxon>Mammalia</taxon>
        <taxon>Eutheria</taxon>
        <taxon>Euarchontoglires</taxon>
        <taxon>Glires</taxon>
        <taxon>Rodentia</taxon>
        <taxon>Myomorpha</taxon>
        <taxon>Muroidea</taxon>
        <taxon>Muridae</taxon>
        <taxon>Murinae</taxon>
        <taxon>Rattus</taxon>
    </lineage>
</organism>